<comment type="function">
    <text evidence="1">DNA-dependent RNA polymerase catalyzes the transcription of DNA into RNA using the four ribonucleoside triphosphates as substrates.</text>
</comment>
<comment type="catalytic activity">
    <reaction>
        <text>RNA(n) + a ribonucleoside 5'-triphosphate = RNA(n+1) + diphosphate</text>
        <dbReference type="Rhea" id="RHEA:21248"/>
        <dbReference type="Rhea" id="RHEA-COMP:14527"/>
        <dbReference type="Rhea" id="RHEA-COMP:17342"/>
        <dbReference type="ChEBI" id="CHEBI:33019"/>
        <dbReference type="ChEBI" id="CHEBI:61557"/>
        <dbReference type="ChEBI" id="CHEBI:140395"/>
        <dbReference type="EC" id="2.7.7.6"/>
    </reaction>
</comment>
<comment type="subunit">
    <text evidence="1">The RNAP catalytic core consists of 2 alpha, 1 beta, 1 beta' and 1 omega subunit. When a sigma factor is associated with the core the holoenzyme is formed, which can initiate transcription (By similarity).</text>
</comment>
<comment type="similarity">
    <text evidence="2">Belongs to the RNA polymerase beta chain family.</text>
</comment>
<keyword id="KW-0240">DNA-directed RNA polymerase</keyword>
<keyword id="KW-0548">Nucleotidyltransferase</keyword>
<keyword id="KW-0804">Transcription</keyword>
<keyword id="KW-0808">Transferase</keyword>
<evidence type="ECO:0000250" key="1"/>
<evidence type="ECO:0000305" key="2"/>
<protein>
    <recommendedName>
        <fullName>DNA-directed RNA polymerase subunit beta</fullName>
        <shortName>RNAP subunit beta</shortName>
        <ecNumber>2.7.7.6</ecNumber>
    </recommendedName>
    <alternativeName>
        <fullName>RNA polymerase subunit beta</fullName>
    </alternativeName>
    <alternativeName>
        <fullName>Transcriptase subunit beta</fullName>
    </alternativeName>
</protein>
<organism>
    <name type="scientific">Liberibacter africanus</name>
    <name type="common">Citrus greening disease</name>
    <name type="synonym">Liberobacter africanum</name>
    <dbReference type="NCBI Taxonomy" id="34020"/>
    <lineage>
        <taxon>Bacteria</taxon>
        <taxon>Pseudomonadati</taxon>
        <taxon>Pseudomonadota</taxon>
        <taxon>Alphaproteobacteria</taxon>
        <taxon>Hyphomicrobiales</taxon>
        <taxon>Rhizobiaceae</taxon>
        <taxon>Liberibacter</taxon>
    </lineage>
</organism>
<sequence>MRRNDGERHCVQWSRGARKFFGKNPEIIDIPDLIEVQKASYDQFLMMNTAPEDRPNEGLQAAFKSVFPIKAFSGAAMLEFVSYEFDPPKFDVDDCLRRDLTYAVPLKIILRLIVFDVDEFTGAKSIKDIKEQSIYMGDVPLMTKDG</sequence>
<accession>P41187</accession>
<dbReference type="EC" id="2.7.7.6"/>
<dbReference type="EMBL" id="U09675">
    <property type="protein sequence ID" value="AAA19557.1"/>
    <property type="molecule type" value="Genomic_DNA"/>
</dbReference>
<dbReference type="SMR" id="P41187"/>
<dbReference type="GO" id="GO:0000428">
    <property type="term" value="C:DNA-directed RNA polymerase complex"/>
    <property type="evidence" value="ECO:0007669"/>
    <property type="project" value="UniProtKB-KW"/>
</dbReference>
<dbReference type="GO" id="GO:0003677">
    <property type="term" value="F:DNA binding"/>
    <property type="evidence" value="ECO:0007669"/>
    <property type="project" value="InterPro"/>
</dbReference>
<dbReference type="GO" id="GO:0003899">
    <property type="term" value="F:DNA-directed RNA polymerase activity"/>
    <property type="evidence" value="ECO:0007669"/>
    <property type="project" value="UniProtKB-EC"/>
</dbReference>
<dbReference type="GO" id="GO:0006351">
    <property type="term" value="P:DNA-templated transcription"/>
    <property type="evidence" value="ECO:0007669"/>
    <property type="project" value="InterPro"/>
</dbReference>
<dbReference type="Gene3D" id="3.90.1100.10">
    <property type="match status" value="1"/>
</dbReference>
<dbReference type="InterPro" id="IPR007644">
    <property type="entry name" value="RNA_pol_bsu_protrusion"/>
</dbReference>
<dbReference type="Pfam" id="PF04563">
    <property type="entry name" value="RNA_pol_Rpb2_1"/>
    <property type="match status" value="1"/>
</dbReference>
<dbReference type="SUPFAM" id="SSF64484">
    <property type="entry name" value="beta and beta-prime subunits of DNA dependent RNA-polymerase"/>
    <property type="match status" value="1"/>
</dbReference>
<feature type="chain" id="PRO_0000047913" description="DNA-directed RNA polymerase subunit beta">
    <location>
        <begin position="1"/>
        <end position="146" status="greater than"/>
    </location>
</feature>
<feature type="non-terminal residue">
    <location>
        <position position="146"/>
    </location>
</feature>
<reference key="1">
    <citation type="journal article" date="1995" name="Curr. Microbiol.">
        <title>Detection and characterization of the African citrus greening Liberobacter by amplification, cloning, and sequencing of the rplKAJL-rpoBC operon.</title>
        <authorList>
            <person name="Planet P."/>
            <person name="Jagoueix S."/>
            <person name="Bove J.M."/>
            <person name="Garnier M."/>
        </authorList>
    </citation>
    <scope>NUCLEOTIDE SEQUENCE [GENOMIC DNA]</scope>
    <source>
        <strain>Nelspruit</strain>
    </source>
</reference>
<gene>
    <name type="primary">rpoB</name>
</gene>
<proteinExistence type="inferred from homology"/>
<name>RPOB_LIBAF</name>